<accession>Q1CA85</accession>
<keyword id="KW-0030">Aminoacyl-tRNA synthetase</keyword>
<keyword id="KW-0067">ATP-binding</keyword>
<keyword id="KW-0963">Cytoplasm</keyword>
<keyword id="KW-0436">Ligase</keyword>
<keyword id="KW-0547">Nucleotide-binding</keyword>
<keyword id="KW-0648">Protein biosynthesis</keyword>
<organism>
    <name type="scientific">Yersinia pestis bv. Antiqua (strain Antiqua)</name>
    <dbReference type="NCBI Taxonomy" id="360102"/>
    <lineage>
        <taxon>Bacteria</taxon>
        <taxon>Pseudomonadati</taxon>
        <taxon>Pseudomonadota</taxon>
        <taxon>Gammaproteobacteria</taxon>
        <taxon>Enterobacterales</taxon>
        <taxon>Yersiniaceae</taxon>
        <taxon>Yersinia</taxon>
    </lineage>
</organism>
<protein>
    <recommendedName>
        <fullName evidence="1">Serine--tRNA ligase</fullName>
        <ecNumber evidence="1">6.1.1.11</ecNumber>
    </recommendedName>
    <alternativeName>
        <fullName evidence="1">Seryl-tRNA synthetase</fullName>
        <shortName evidence="1">SerRS</shortName>
    </alternativeName>
    <alternativeName>
        <fullName evidence="1">Seryl-tRNA(Ser/Sec) synthetase</fullName>
    </alternativeName>
</protein>
<name>SYS_YERPA</name>
<evidence type="ECO:0000255" key="1">
    <source>
        <dbReference type="HAMAP-Rule" id="MF_00176"/>
    </source>
</evidence>
<gene>
    <name evidence="1" type="primary">serS</name>
    <name type="ordered locus">YPA_0669</name>
</gene>
<comment type="function">
    <text evidence="1">Catalyzes the attachment of serine to tRNA(Ser). Is also able to aminoacylate tRNA(Sec) with serine, to form the misacylated tRNA L-seryl-tRNA(Sec), which will be further converted into selenocysteinyl-tRNA(Sec).</text>
</comment>
<comment type="catalytic activity">
    <reaction evidence="1">
        <text>tRNA(Ser) + L-serine + ATP = L-seryl-tRNA(Ser) + AMP + diphosphate + H(+)</text>
        <dbReference type="Rhea" id="RHEA:12292"/>
        <dbReference type="Rhea" id="RHEA-COMP:9669"/>
        <dbReference type="Rhea" id="RHEA-COMP:9703"/>
        <dbReference type="ChEBI" id="CHEBI:15378"/>
        <dbReference type="ChEBI" id="CHEBI:30616"/>
        <dbReference type="ChEBI" id="CHEBI:33019"/>
        <dbReference type="ChEBI" id="CHEBI:33384"/>
        <dbReference type="ChEBI" id="CHEBI:78442"/>
        <dbReference type="ChEBI" id="CHEBI:78533"/>
        <dbReference type="ChEBI" id="CHEBI:456215"/>
        <dbReference type="EC" id="6.1.1.11"/>
    </reaction>
</comment>
<comment type="catalytic activity">
    <reaction evidence="1">
        <text>tRNA(Sec) + L-serine + ATP = L-seryl-tRNA(Sec) + AMP + diphosphate + H(+)</text>
        <dbReference type="Rhea" id="RHEA:42580"/>
        <dbReference type="Rhea" id="RHEA-COMP:9742"/>
        <dbReference type="Rhea" id="RHEA-COMP:10128"/>
        <dbReference type="ChEBI" id="CHEBI:15378"/>
        <dbReference type="ChEBI" id="CHEBI:30616"/>
        <dbReference type="ChEBI" id="CHEBI:33019"/>
        <dbReference type="ChEBI" id="CHEBI:33384"/>
        <dbReference type="ChEBI" id="CHEBI:78442"/>
        <dbReference type="ChEBI" id="CHEBI:78533"/>
        <dbReference type="ChEBI" id="CHEBI:456215"/>
        <dbReference type="EC" id="6.1.1.11"/>
    </reaction>
</comment>
<comment type="pathway">
    <text evidence="1">Aminoacyl-tRNA biosynthesis; selenocysteinyl-tRNA(Sec) biosynthesis; L-seryl-tRNA(Sec) from L-serine and tRNA(Sec): step 1/1.</text>
</comment>
<comment type="subunit">
    <text evidence="1">Homodimer. The tRNA molecule binds across the dimer.</text>
</comment>
<comment type="subcellular location">
    <subcellularLocation>
        <location evidence="1">Cytoplasm</location>
    </subcellularLocation>
</comment>
<comment type="domain">
    <text evidence="1">Consists of two distinct domains, a catalytic core and a N-terminal extension that is involved in tRNA binding.</text>
</comment>
<comment type="similarity">
    <text evidence="1">Belongs to the class-II aminoacyl-tRNA synthetase family. Type-1 seryl-tRNA synthetase subfamily.</text>
</comment>
<proteinExistence type="inferred from homology"/>
<reference key="1">
    <citation type="journal article" date="2006" name="J. Bacteriol.">
        <title>Complete genome sequence of Yersinia pestis strains Antiqua and Nepal516: evidence of gene reduction in an emerging pathogen.</title>
        <authorList>
            <person name="Chain P.S.G."/>
            <person name="Hu P."/>
            <person name="Malfatti S.A."/>
            <person name="Radnedge L."/>
            <person name="Larimer F."/>
            <person name="Vergez L.M."/>
            <person name="Worsham P."/>
            <person name="Chu M.C."/>
            <person name="Andersen G.L."/>
        </authorList>
    </citation>
    <scope>NUCLEOTIDE SEQUENCE [LARGE SCALE GENOMIC DNA]</scope>
    <source>
        <strain>Antiqua</strain>
    </source>
</reference>
<sequence length="430" mass="48569">MLDPNMLRNELDAVAEKLARRGFKLDVEVLRQQEERRKVLQVETESLQAERNSRSKQIGAAKARGEDIEPLRLEVNALGEKLDAAKAELDKLQNEIRDLALSIPNLPDDSVPVGKNENDNIEVSRWGEPRKYDFDVKDHVSLGEMAGGLDFAAAVKLTGARFVVMKGQIARMHRALSQFMLDLHTEKHGYLEAYVPYLVNHATLYGTGQLPKFGEDLFHTKPLAEESDNSNYALIPTAEVPLTNLVRDEILEEDSLPLKLTAHTPCFRSEAGSYGRDTRGLIRMHQFDKVEMVQITRPEDSMAALEELTGHAEKVLQLLELPYRKVLLCTGDMGFGSSKTYDLEVWLPAQDTYREISSCSNMWDFQARRMQARYRNKTDRKTRLVHTLNGSGLAVGRTLVAVLENYQQADGRIQVPDVLRPYMGGLEYIG</sequence>
<dbReference type="EC" id="6.1.1.11" evidence="1"/>
<dbReference type="EMBL" id="CP000308">
    <property type="protein sequence ID" value="ABG12637.1"/>
    <property type="molecule type" value="Genomic_DNA"/>
</dbReference>
<dbReference type="RefSeq" id="WP_002211336.1">
    <property type="nucleotide sequence ID" value="NZ_CP009906.1"/>
</dbReference>
<dbReference type="SMR" id="Q1CA85"/>
<dbReference type="GeneID" id="57977175"/>
<dbReference type="KEGG" id="ypa:YPA_0669"/>
<dbReference type="UniPathway" id="UPA00906">
    <property type="reaction ID" value="UER00895"/>
</dbReference>
<dbReference type="Proteomes" id="UP000001971">
    <property type="component" value="Chromosome"/>
</dbReference>
<dbReference type="GO" id="GO:0005737">
    <property type="term" value="C:cytoplasm"/>
    <property type="evidence" value="ECO:0007669"/>
    <property type="project" value="UniProtKB-SubCell"/>
</dbReference>
<dbReference type="GO" id="GO:0005524">
    <property type="term" value="F:ATP binding"/>
    <property type="evidence" value="ECO:0007669"/>
    <property type="project" value="UniProtKB-UniRule"/>
</dbReference>
<dbReference type="GO" id="GO:0004828">
    <property type="term" value="F:serine-tRNA ligase activity"/>
    <property type="evidence" value="ECO:0007669"/>
    <property type="project" value="UniProtKB-UniRule"/>
</dbReference>
<dbReference type="GO" id="GO:0016260">
    <property type="term" value="P:selenocysteine biosynthetic process"/>
    <property type="evidence" value="ECO:0007669"/>
    <property type="project" value="UniProtKB-UniRule"/>
</dbReference>
<dbReference type="GO" id="GO:0006434">
    <property type="term" value="P:seryl-tRNA aminoacylation"/>
    <property type="evidence" value="ECO:0007669"/>
    <property type="project" value="UniProtKB-UniRule"/>
</dbReference>
<dbReference type="CDD" id="cd00770">
    <property type="entry name" value="SerRS_core"/>
    <property type="match status" value="1"/>
</dbReference>
<dbReference type="FunFam" id="1.10.287.40:FF:000001">
    <property type="entry name" value="Serine--tRNA ligase"/>
    <property type="match status" value="1"/>
</dbReference>
<dbReference type="FunFam" id="3.30.930.10:FF:000018">
    <property type="entry name" value="Serine--tRNA ligase"/>
    <property type="match status" value="1"/>
</dbReference>
<dbReference type="Gene3D" id="3.30.930.10">
    <property type="entry name" value="Bira Bifunctional Protein, Domain 2"/>
    <property type="match status" value="1"/>
</dbReference>
<dbReference type="Gene3D" id="1.10.287.40">
    <property type="entry name" value="Serine-tRNA synthetase, tRNA binding domain"/>
    <property type="match status" value="1"/>
</dbReference>
<dbReference type="HAMAP" id="MF_00176">
    <property type="entry name" value="Ser_tRNA_synth_type1"/>
    <property type="match status" value="1"/>
</dbReference>
<dbReference type="InterPro" id="IPR002314">
    <property type="entry name" value="aa-tRNA-synt_IIb"/>
</dbReference>
<dbReference type="InterPro" id="IPR006195">
    <property type="entry name" value="aa-tRNA-synth_II"/>
</dbReference>
<dbReference type="InterPro" id="IPR045864">
    <property type="entry name" value="aa-tRNA-synth_II/BPL/LPL"/>
</dbReference>
<dbReference type="InterPro" id="IPR002317">
    <property type="entry name" value="Ser-tRNA-ligase_type_1"/>
</dbReference>
<dbReference type="InterPro" id="IPR015866">
    <property type="entry name" value="Ser-tRNA-synth_1_N"/>
</dbReference>
<dbReference type="InterPro" id="IPR042103">
    <property type="entry name" value="SerRS_1_N_sf"/>
</dbReference>
<dbReference type="InterPro" id="IPR033729">
    <property type="entry name" value="SerRS_core"/>
</dbReference>
<dbReference type="InterPro" id="IPR010978">
    <property type="entry name" value="tRNA-bd_arm"/>
</dbReference>
<dbReference type="NCBIfam" id="TIGR00414">
    <property type="entry name" value="serS"/>
    <property type="match status" value="1"/>
</dbReference>
<dbReference type="PANTHER" id="PTHR43697:SF1">
    <property type="entry name" value="SERINE--TRNA LIGASE"/>
    <property type="match status" value="1"/>
</dbReference>
<dbReference type="PANTHER" id="PTHR43697">
    <property type="entry name" value="SERYL-TRNA SYNTHETASE"/>
    <property type="match status" value="1"/>
</dbReference>
<dbReference type="Pfam" id="PF02403">
    <property type="entry name" value="Seryl_tRNA_N"/>
    <property type="match status" value="1"/>
</dbReference>
<dbReference type="Pfam" id="PF00587">
    <property type="entry name" value="tRNA-synt_2b"/>
    <property type="match status" value="1"/>
</dbReference>
<dbReference type="PIRSF" id="PIRSF001529">
    <property type="entry name" value="Ser-tRNA-synth_IIa"/>
    <property type="match status" value="1"/>
</dbReference>
<dbReference type="PRINTS" id="PR00981">
    <property type="entry name" value="TRNASYNTHSER"/>
</dbReference>
<dbReference type="SUPFAM" id="SSF55681">
    <property type="entry name" value="Class II aaRS and biotin synthetases"/>
    <property type="match status" value="1"/>
</dbReference>
<dbReference type="SUPFAM" id="SSF46589">
    <property type="entry name" value="tRNA-binding arm"/>
    <property type="match status" value="1"/>
</dbReference>
<dbReference type="PROSITE" id="PS50862">
    <property type="entry name" value="AA_TRNA_LIGASE_II"/>
    <property type="match status" value="1"/>
</dbReference>
<feature type="chain" id="PRO_1000019870" description="Serine--tRNA ligase">
    <location>
        <begin position="1"/>
        <end position="430"/>
    </location>
</feature>
<feature type="binding site" evidence="1">
    <location>
        <begin position="237"/>
        <end position="239"/>
    </location>
    <ligand>
        <name>L-serine</name>
        <dbReference type="ChEBI" id="CHEBI:33384"/>
    </ligand>
</feature>
<feature type="binding site" evidence="1">
    <location>
        <begin position="268"/>
        <end position="270"/>
    </location>
    <ligand>
        <name>ATP</name>
        <dbReference type="ChEBI" id="CHEBI:30616"/>
    </ligand>
</feature>
<feature type="binding site" evidence="1">
    <location>
        <position position="291"/>
    </location>
    <ligand>
        <name>L-serine</name>
        <dbReference type="ChEBI" id="CHEBI:33384"/>
    </ligand>
</feature>
<feature type="binding site" evidence="1">
    <location>
        <begin position="355"/>
        <end position="358"/>
    </location>
    <ligand>
        <name>ATP</name>
        <dbReference type="ChEBI" id="CHEBI:30616"/>
    </ligand>
</feature>
<feature type="binding site" evidence="1">
    <location>
        <position position="391"/>
    </location>
    <ligand>
        <name>L-serine</name>
        <dbReference type="ChEBI" id="CHEBI:33384"/>
    </ligand>
</feature>